<name>CRBA1_CHICK</name>
<evidence type="ECO:0000250" key="1"/>
<evidence type="ECO:0000255" key="2">
    <source>
        <dbReference type="PROSITE-ProRule" id="PRU00028"/>
    </source>
</evidence>
<evidence type="ECO:0000305" key="3"/>
<dbReference type="EMBL" id="M15658">
    <property type="protein sequence ID" value="AAA48724.1"/>
    <property type="molecule type" value="mRNA"/>
</dbReference>
<dbReference type="EMBL" id="M15658">
    <property type="protein sequence ID" value="AAA48725.1"/>
    <property type="status" value="ALT_INIT"/>
    <property type="molecule type" value="mRNA"/>
</dbReference>
<dbReference type="EMBL" id="M84460">
    <property type="protein sequence ID" value="AAA48612.1"/>
    <property type="status" value="ALT_INIT"/>
    <property type="molecule type" value="Genomic_DNA"/>
</dbReference>
<dbReference type="EMBL" id="M84460">
    <property type="protein sequence ID" value="AAA48611.1"/>
    <property type="status" value="ALT_SEQ"/>
    <property type="molecule type" value="Genomic_DNA"/>
</dbReference>
<dbReference type="PIR" id="JC1231">
    <property type="entry name" value="JC1231"/>
</dbReference>
<dbReference type="RefSeq" id="NP_990833.2">
    <molecule id="P10042-1"/>
    <property type="nucleotide sequence ID" value="NM_205502.3"/>
</dbReference>
<dbReference type="RefSeq" id="XP_015151175.1">
    <property type="nucleotide sequence ID" value="XM_015295689.1"/>
</dbReference>
<dbReference type="RefSeq" id="XP_015151176.1">
    <molecule id="P10042-1"/>
    <property type="nucleotide sequence ID" value="XM_015295690.4"/>
</dbReference>
<dbReference type="RefSeq" id="XP_040505971.1">
    <molecule id="P10042-1"/>
    <property type="nucleotide sequence ID" value="XM_040650037.2"/>
</dbReference>
<dbReference type="RefSeq" id="XP_046758258.1">
    <molecule id="P10042-1"/>
    <property type="nucleotide sequence ID" value="XM_046902302.1"/>
</dbReference>
<dbReference type="RefSeq" id="XP_046785906.1">
    <molecule id="P10042-1"/>
    <property type="nucleotide sequence ID" value="XM_046929950.1"/>
</dbReference>
<dbReference type="RefSeq" id="XP_046785907.1">
    <molecule id="P10042-1"/>
    <property type="nucleotide sequence ID" value="XM_046929951.1"/>
</dbReference>
<dbReference type="SMR" id="P10042"/>
<dbReference type="FunCoup" id="P10042">
    <property type="interactions" value="22"/>
</dbReference>
<dbReference type="STRING" id="9031.ENSGALP00000006416"/>
<dbReference type="PaxDb" id="9031-ENSGALP00000006416"/>
<dbReference type="Ensembl" id="ENSGALT00010071814.1">
    <molecule id="P10042-1"/>
    <property type="protein sequence ID" value="ENSGALP00010044504.1"/>
    <property type="gene ID" value="ENSGALG00010029692.1"/>
</dbReference>
<dbReference type="GeneID" id="396499"/>
<dbReference type="KEGG" id="gga:396499"/>
<dbReference type="CTD" id="1411"/>
<dbReference type="VEuPathDB" id="HostDB:geneid_396499"/>
<dbReference type="eggNOG" id="ENOG502QSM0">
    <property type="taxonomic scope" value="Eukaryota"/>
</dbReference>
<dbReference type="GeneTree" id="ENSGT00940000159685"/>
<dbReference type="HOGENOM" id="CLU_081883_0_0_1"/>
<dbReference type="InParanoid" id="P10042"/>
<dbReference type="OrthoDB" id="8688215at2759"/>
<dbReference type="PhylomeDB" id="P10042"/>
<dbReference type="PRO" id="PR:P10042"/>
<dbReference type="Proteomes" id="UP000000539">
    <property type="component" value="Chromosome 19"/>
</dbReference>
<dbReference type="Bgee" id="ENSGALG00000004035">
    <property type="expression patterns" value="Expressed in testis and 6 other cell types or tissues"/>
</dbReference>
<dbReference type="GO" id="GO:0005212">
    <property type="term" value="F:structural constituent of eye lens"/>
    <property type="evidence" value="ECO:0000318"/>
    <property type="project" value="GO_Central"/>
</dbReference>
<dbReference type="GO" id="GO:0002088">
    <property type="term" value="P:lens development in camera-type eye"/>
    <property type="evidence" value="ECO:0000318"/>
    <property type="project" value="GO_Central"/>
</dbReference>
<dbReference type="GO" id="GO:0007601">
    <property type="term" value="P:visual perception"/>
    <property type="evidence" value="ECO:0000318"/>
    <property type="project" value="GO_Central"/>
</dbReference>
<dbReference type="FunFam" id="2.60.20.10:FF:000004">
    <property type="entry name" value="Crystallin beta A4"/>
    <property type="match status" value="1"/>
</dbReference>
<dbReference type="FunFam" id="2.60.20.10:FF:000002">
    <property type="entry name" value="Crystallin, beta B2"/>
    <property type="match status" value="1"/>
</dbReference>
<dbReference type="Gene3D" id="2.60.20.10">
    <property type="entry name" value="Crystallins"/>
    <property type="match status" value="2"/>
</dbReference>
<dbReference type="InterPro" id="IPR050252">
    <property type="entry name" value="Beta/Gamma-Crystallin"/>
</dbReference>
<dbReference type="InterPro" id="IPR001064">
    <property type="entry name" value="Beta/gamma_crystallin"/>
</dbReference>
<dbReference type="InterPro" id="IPR011024">
    <property type="entry name" value="G_crystallin-like"/>
</dbReference>
<dbReference type="PANTHER" id="PTHR11818:SF8">
    <property type="entry name" value="BETA-CRYSTALLIN A3"/>
    <property type="match status" value="1"/>
</dbReference>
<dbReference type="PANTHER" id="PTHR11818">
    <property type="entry name" value="BETA/GAMMA CRYSTALLIN"/>
    <property type="match status" value="1"/>
</dbReference>
<dbReference type="Pfam" id="PF00030">
    <property type="entry name" value="Crystall"/>
    <property type="match status" value="2"/>
</dbReference>
<dbReference type="PRINTS" id="PR01367">
    <property type="entry name" value="BGCRYSTALLIN"/>
</dbReference>
<dbReference type="SMART" id="SM00247">
    <property type="entry name" value="XTALbg"/>
    <property type="match status" value="2"/>
</dbReference>
<dbReference type="SUPFAM" id="SSF49695">
    <property type="entry name" value="gamma-Crystallin-like"/>
    <property type="match status" value="1"/>
</dbReference>
<dbReference type="PROSITE" id="PS50915">
    <property type="entry name" value="CRYSTALLIN_BETA_GAMMA"/>
    <property type="match status" value="4"/>
</dbReference>
<protein>
    <recommendedName>
        <fullName>Beta-crystallin A3</fullName>
    </recommendedName>
    <alternativeName>
        <fullName>Beta-crystallin A1</fullName>
    </alternativeName>
</protein>
<accession>P10042</accession>
<reference key="1">
    <citation type="journal article" date="1986" name="Gene">
        <title>Preferential conservation of the globular domains of the beta A3/A1-crystallin polypeptide of the chicken eye lens.</title>
        <authorList>
            <person name="Peterson C.A."/>
            <person name="Piatigorsky J."/>
        </authorList>
    </citation>
    <scope>NUCLEOTIDE SEQUENCE [MRNA]</scope>
</reference>
<reference key="2">
    <citation type="journal article" date="1992" name="Gene">
        <title>Structure and lens expression of the gene encoding chicken beta A3/A1-crystallin.</title>
        <authorList>
            <person name="McDermott J.B."/>
            <person name="Peterson C.A."/>
            <person name="Piatigorsky J."/>
        </authorList>
    </citation>
    <scope>NUCLEOTIDE SEQUENCE [GENOMIC DNA]</scope>
</reference>
<keyword id="KW-0024">Alternative initiation</keyword>
<keyword id="KW-0273">Eye lens protein</keyword>
<keyword id="KW-1185">Reference proteome</keyword>
<keyword id="KW-0677">Repeat</keyword>
<proteinExistence type="evidence at transcript level"/>
<feature type="chain" id="PRO_0000006335" description="Beta-crystallin A3">
    <location>
        <begin position="1"/>
        <end position="215"/>
    </location>
</feature>
<feature type="domain" description="Beta/gamma crystallin 'Greek key' 1" evidence="2">
    <location>
        <begin position="31"/>
        <end position="70"/>
    </location>
</feature>
<feature type="domain" description="Beta/gamma crystallin 'Greek key' 2" evidence="2">
    <location>
        <begin position="71"/>
        <end position="117"/>
    </location>
</feature>
<feature type="domain" description="Beta/gamma crystallin 'Greek key' 3" evidence="2">
    <location>
        <begin position="124"/>
        <end position="165"/>
    </location>
</feature>
<feature type="domain" description="Beta/gamma crystallin 'Greek key' 4" evidence="2">
    <location>
        <begin position="166"/>
        <end position="214"/>
    </location>
</feature>
<feature type="region of interest" description="N-terminal arm">
    <location>
        <begin position="1"/>
        <end position="30"/>
    </location>
</feature>
<feature type="region of interest" description="Connecting peptide">
    <location>
        <begin position="118"/>
        <end position="123"/>
    </location>
</feature>
<feature type="splice variant" id="VSP_018712" description="In isoform A1." evidence="3">
    <location>
        <begin position="1"/>
        <end position="17"/>
    </location>
</feature>
<gene>
    <name type="primary">CRYBA1</name>
</gene>
<organism>
    <name type="scientific">Gallus gallus</name>
    <name type="common">Chicken</name>
    <dbReference type="NCBI Taxonomy" id="9031"/>
    <lineage>
        <taxon>Eukaryota</taxon>
        <taxon>Metazoa</taxon>
        <taxon>Chordata</taxon>
        <taxon>Craniata</taxon>
        <taxon>Vertebrata</taxon>
        <taxon>Euteleostomi</taxon>
        <taxon>Archelosauria</taxon>
        <taxon>Archosauria</taxon>
        <taxon>Dinosauria</taxon>
        <taxon>Saurischia</taxon>
        <taxon>Theropoda</taxon>
        <taxon>Coelurosauria</taxon>
        <taxon>Aves</taxon>
        <taxon>Neognathae</taxon>
        <taxon>Galloanserae</taxon>
        <taxon>Galliformes</taxon>
        <taxon>Phasianidae</taxon>
        <taxon>Phasianinae</taxon>
        <taxon>Gallus</taxon>
    </lineage>
</organism>
<sequence length="215" mass="24749">MGEAAVPPELDTFPAAKMAQTNPLPVPMGPWKITVYDQENFQGKRMEFTSACPNIMECGFDNIRSLKVECGAWVGYEHTGFCGQQFILERGEYPRWDAWSGSNAYHIERLMSFRPVCSANHKESKITVYEKDNFIGRQWEISDDYPSLQAMGWANNEVGSMKIPCGAWVCYQYPGYRGYQYVLEADHHGGDYKHWREWGSHAQTSQIQSIRRIQQ</sequence>
<comment type="function">
    <text>Crystallins are the dominant structural components of the vertebrate eye lens.</text>
</comment>
<comment type="subunit">
    <text evidence="1">Homo/heterodimer, or complexes of higher-order. The structure of beta-crystallin oligomers seems to be stabilized through interactions between the N-terminal arms (By similarity).</text>
</comment>
<comment type="alternative products">
    <event type="alternative initiation"/>
    <isoform>
        <id>P10042-1</id>
        <name>A3</name>
        <sequence type="displayed"/>
    </isoform>
    <isoform>
        <id>P10042-2</id>
        <name>A1</name>
        <sequence type="described" ref="VSP_018712"/>
    </isoform>
</comment>
<comment type="domain">
    <text>Has a two-domain beta-structure, folded into four very similar Greek key motifs.</text>
</comment>
<comment type="similarity">
    <text evidence="3">Belongs to the beta/gamma-crystallin family.</text>
</comment>
<comment type="sequence caution" evidence="3">
    <conflict type="erroneous initiation">
        <sequence resource="EMBL-CDS" id="AAA48612"/>
    </conflict>
</comment>
<comment type="sequence caution" evidence="3">
    <conflict type="erroneous initiation">
        <sequence resource="EMBL-CDS" id="AAA48725"/>
    </conflict>
</comment>